<protein>
    <recommendedName>
        <fullName evidence="1">Methionine aminopeptidase 2</fullName>
        <shortName evidence="1">MAP 2</shortName>
        <shortName evidence="1">MetAP 2</shortName>
        <ecNumber evidence="1">3.4.11.18</ecNumber>
    </recommendedName>
    <alternativeName>
        <fullName evidence="1">Peptidase M</fullName>
    </alternativeName>
</protein>
<keyword id="KW-0031">Aminopeptidase</keyword>
<keyword id="KW-0963">Cytoplasm</keyword>
<keyword id="KW-0378">Hydrolase</keyword>
<keyword id="KW-0479">Metal-binding</keyword>
<keyword id="KW-0645">Protease</keyword>
<keyword id="KW-1185">Reference proteome</keyword>
<organism>
    <name type="scientific">Schizophyllum commune (strain H4-8 / FGSC 9210)</name>
    <name type="common">Split gill fungus</name>
    <dbReference type="NCBI Taxonomy" id="578458"/>
    <lineage>
        <taxon>Eukaryota</taxon>
        <taxon>Fungi</taxon>
        <taxon>Dikarya</taxon>
        <taxon>Basidiomycota</taxon>
        <taxon>Agaricomycotina</taxon>
        <taxon>Agaricomycetes</taxon>
        <taxon>Agaricomycetidae</taxon>
        <taxon>Agaricales</taxon>
        <taxon>Schizophyllaceae</taxon>
        <taxon>Schizophyllum</taxon>
    </lineage>
</organism>
<accession>D8PR70</accession>
<comment type="function">
    <text evidence="1">Cotranslationally removes the N-terminal methionine from nascent proteins. The N-terminal methionine is often cleaved when the second residue in the primary sequence is small and uncharged (Met-Ala-, Cys, Gly, Pro, Ser, Thr, or Val).</text>
</comment>
<comment type="catalytic activity">
    <reaction evidence="1">
        <text>Release of N-terminal amino acids, preferentially methionine, from peptides and arylamides.</text>
        <dbReference type="EC" id="3.4.11.18"/>
    </reaction>
</comment>
<comment type="cofactor">
    <cofactor evidence="1">
        <name>Co(2+)</name>
        <dbReference type="ChEBI" id="CHEBI:48828"/>
    </cofactor>
    <cofactor evidence="1">
        <name>Zn(2+)</name>
        <dbReference type="ChEBI" id="CHEBI:29105"/>
    </cofactor>
    <cofactor evidence="1">
        <name>Mn(2+)</name>
        <dbReference type="ChEBI" id="CHEBI:29035"/>
    </cofactor>
    <cofactor evidence="1">
        <name>Fe(2+)</name>
        <dbReference type="ChEBI" id="CHEBI:29033"/>
    </cofactor>
    <text evidence="1">Binds 2 divalent metal cations per subunit. Has a high-affinity and a low affinity metal-binding site. The true nature of the physiological cofactor is under debate. The enzyme is active with cobalt, zinc, manganese or divalent iron ions. Most likely, methionine aminopeptidases function as mononuclear Fe(2+)-metalloproteases under physiological conditions, and the catalytically relevant metal-binding site has been assigned to the histidine-containing high-affinity site.</text>
</comment>
<comment type="subcellular location">
    <subcellularLocation>
        <location evidence="1">Cytoplasm</location>
    </subcellularLocation>
</comment>
<comment type="similarity">
    <text evidence="1">Belongs to the peptidase M24A family. Methionine aminopeptidase eukaryotic type 2 subfamily.</text>
</comment>
<dbReference type="EC" id="3.4.11.18" evidence="1"/>
<dbReference type="EMBL" id="GL377302">
    <property type="protein sequence ID" value="EFJ03808.1"/>
    <property type="molecule type" value="Genomic_DNA"/>
</dbReference>
<dbReference type="RefSeq" id="XP_003038710.1">
    <property type="nucleotide sequence ID" value="XM_003038664.1"/>
</dbReference>
<dbReference type="SMR" id="D8PR70"/>
<dbReference type="FunCoup" id="D8PR70">
    <property type="interactions" value="753"/>
</dbReference>
<dbReference type="STRING" id="578458.D8PR70"/>
<dbReference type="GeneID" id="9592388"/>
<dbReference type="KEGG" id="scm:SCHCO_02611030"/>
<dbReference type="VEuPathDB" id="FungiDB:SCHCODRAFT_02611030"/>
<dbReference type="eggNOG" id="KOG2775">
    <property type="taxonomic scope" value="Eukaryota"/>
</dbReference>
<dbReference type="HOGENOM" id="CLU_015857_7_1_1"/>
<dbReference type="InParanoid" id="D8PR70"/>
<dbReference type="OMA" id="PFAKRWL"/>
<dbReference type="OrthoDB" id="7848262at2759"/>
<dbReference type="Proteomes" id="UP000007431">
    <property type="component" value="Unassembled WGS sequence"/>
</dbReference>
<dbReference type="GO" id="GO:0005737">
    <property type="term" value="C:cytoplasm"/>
    <property type="evidence" value="ECO:0007669"/>
    <property type="project" value="UniProtKB-SubCell"/>
</dbReference>
<dbReference type="GO" id="GO:0004239">
    <property type="term" value="F:initiator methionyl aminopeptidase activity"/>
    <property type="evidence" value="ECO:0007669"/>
    <property type="project" value="UniProtKB-UniRule"/>
</dbReference>
<dbReference type="GO" id="GO:0046872">
    <property type="term" value="F:metal ion binding"/>
    <property type="evidence" value="ECO:0007669"/>
    <property type="project" value="UniProtKB-UniRule"/>
</dbReference>
<dbReference type="GO" id="GO:0070006">
    <property type="term" value="F:metalloaminopeptidase activity"/>
    <property type="evidence" value="ECO:0007669"/>
    <property type="project" value="UniProtKB-UniRule"/>
</dbReference>
<dbReference type="GO" id="GO:0006508">
    <property type="term" value="P:proteolysis"/>
    <property type="evidence" value="ECO:0007669"/>
    <property type="project" value="UniProtKB-KW"/>
</dbReference>
<dbReference type="CDD" id="cd01088">
    <property type="entry name" value="MetAP2"/>
    <property type="match status" value="1"/>
</dbReference>
<dbReference type="Gene3D" id="3.90.230.10">
    <property type="entry name" value="Creatinase/methionine aminopeptidase superfamily"/>
    <property type="match status" value="1"/>
</dbReference>
<dbReference type="Gene3D" id="1.10.10.10">
    <property type="entry name" value="Winged helix-like DNA-binding domain superfamily/Winged helix DNA-binding domain"/>
    <property type="match status" value="1"/>
</dbReference>
<dbReference type="HAMAP" id="MF_03175">
    <property type="entry name" value="MetAP_2_euk"/>
    <property type="match status" value="1"/>
</dbReference>
<dbReference type="InterPro" id="IPR036005">
    <property type="entry name" value="Creatinase/aminopeptidase-like"/>
</dbReference>
<dbReference type="InterPro" id="IPR050247">
    <property type="entry name" value="Met_Aminopeptidase_Type2"/>
</dbReference>
<dbReference type="InterPro" id="IPR000994">
    <property type="entry name" value="Pept_M24"/>
</dbReference>
<dbReference type="InterPro" id="IPR001714">
    <property type="entry name" value="Pept_M24_MAP"/>
</dbReference>
<dbReference type="InterPro" id="IPR002468">
    <property type="entry name" value="Pept_M24A_MAP2"/>
</dbReference>
<dbReference type="InterPro" id="IPR036388">
    <property type="entry name" value="WH-like_DNA-bd_sf"/>
</dbReference>
<dbReference type="InterPro" id="IPR036390">
    <property type="entry name" value="WH_DNA-bd_sf"/>
</dbReference>
<dbReference type="NCBIfam" id="TIGR00501">
    <property type="entry name" value="met_pdase_II"/>
    <property type="match status" value="1"/>
</dbReference>
<dbReference type="PANTHER" id="PTHR45777">
    <property type="entry name" value="METHIONINE AMINOPEPTIDASE 2"/>
    <property type="match status" value="1"/>
</dbReference>
<dbReference type="PANTHER" id="PTHR45777:SF2">
    <property type="entry name" value="METHIONINE AMINOPEPTIDASE 2"/>
    <property type="match status" value="1"/>
</dbReference>
<dbReference type="Pfam" id="PF00557">
    <property type="entry name" value="Peptidase_M24"/>
    <property type="match status" value="1"/>
</dbReference>
<dbReference type="PRINTS" id="PR00599">
    <property type="entry name" value="MAPEPTIDASE"/>
</dbReference>
<dbReference type="SUPFAM" id="SSF55920">
    <property type="entry name" value="Creatinase/aminopeptidase"/>
    <property type="match status" value="1"/>
</dbReference>
<dbReference type="SUPFAM" id="SSF46785">
    <property type="entry name" value="Winged helix' DNA-binding domain"/>
    <property type="match status" value="1"/>
</dbReference>
<proteinExistence type="inferred from homology"/>
<evidence type="ECO:0000255" key="1">
    <source>
        <dbReference type="HAMAP-Rule" id="MF_03175"/>
    </source>
</evidence>
<evidence type="ECO:0000256" key="2">
    <source>
        <dbReference type="SAM" id="MobiDB-lite"/>
    </source>
</evidence>
<reference key="1">
    <citation type="journal article" date="2010" name="Nat. Biotechnol.">
        <title>Genome sequence of the model mushroom Schizophyllum commune.</title>
        <authorList>
            <person name="Ohm R.A."/>
            <person name="de Jong J.F."/>
            <person name="Lugones L.G."/>
            <person name="Aerts A."/>
            <person name="Kothe E."/>
            <person name="Stajich J.E."/>
            <person name="de Vries R.P."/>
            <person name="Record E."/>
            <person name="Levasseur A."/>
            <person name="Baker S.E."/>
            <person name="Bartholomew K.A."/>
            <person name="Coutinho P.M."/>
            <person name="Erdmann S."/>
            <person name="Fowler T.J."/>
            <person name="Gathman A.C."/>
            <person name="Lombard V."/>
            <person name="Henrissat B."/>
            <person name="Knabe N."/>
            <person name="Kuees U."/>
            <person name="Lilly W.W."/>
            <person name="Lindquist E."/>
            <person name="Lucas S."/>
            <person name="Magnuson J.K."/>
            <person name="Piumi F."/>
            <person name="Raudaskoski M."/>
            <person name="Salamov A."/>
            <person name="Schmutz J."/>
            <person name="Schwarze F.W.M.R."/>
            <person name="vanKuyk P.A."/>
            <person name="Horton J.S."/>
            <person name="Grigoriev I.V."/>
            <person name="Woesten H.A.B."/>
        </authorList>
    </citation>
    <scope>NUCLEOTIDE SEQUENCE [LARGE SCALE GENOMIC DNA]</scope>
    <source>
        <strain>H4-8 / FGSC 9210</strain>
    </source>
</reference>
<gene>
    <name type="ORF">SCHCODRAFT_64644</name>
</gene>
<sequence length="423" mass="46783">MTDVIDAKPEEAKKVPPEVEDEDSGDESAPEASAAGGEATKKKKKKKKPKKKKKAAEQSEPPRVGLSKLFPNGIYPEGEIQPYKDDNAYRTTSEEKRYLERITCEDPDETYQNIRKGAEVHRQVRQYAQRTIKPGMTMTEIANLIEDGTRALVEENGLEAGIGFPTGLSLNNCAAHYTPNAGDTIVLQQGDVMKVDIGVQVKGRIVDSAFTMTFEPTYDKLLEAVRAATNTGIREAGIDARLGEIAGAIQETMESYEVEVNGKLIPVKPIANLSGHSIDRYTIHAGKSVCLVKNDDQTKMEEGEYFAIETFGSTGRGRVVDGGECSHYARKVDAPHVPLRLTTAKSLLKSINKNFGTIPFCRRYLDRIGESKYLLALNHLVQQGIVEDYPPLYDQQGSMTAQFEHTILLRPTVKEVVSRGDDY</sequence>
<name>MAP2_SCHCM</name>
<feature type="chain" id="PRO_0000407667" description="Methionine aminopeptidase 2">
    <location>
        <begin position="1"/>
        <end position="423"/>
    </location>
</feature>
<feature type="region of interest" description="Disordered" evidence="2">
    <location>
        <begin position="1"/>
        <end position="89"/>
    </location>
</feature>
<feature type="compositionally biased region" description="Basic and acidic residues" evidence="2">
    <location>
        <begin position="1"/>
        <end position="17"/>
    </location>
</feature>
<feature type="compositionally biased region" description="Acidic residues" evidence="2">
    <location>
        <begin position="18"/>
        <end position="29"/>
    </location>
</feature>
<feature type="compositionally biased region" description="Basic residues" evidence="2">
    <location>
        <begin position="41"/>
        <end position="54"/>
    </location>
</feature>
<feature type="binding site" evidence="1">
    <location>
        <position position="176"/>
    </location>
    <ligand>
        <name>substrate</name>
    </ligand>
</feature>
<feature type="binding site" evidence="1">
    <location>
        <position position="196"/>
    </location>
    <ligand>
        <name>a divalent metal cation</name>
        <dbReference type="ChEBI" id="CHEBI:60240"/>
        <label>1</label>
    </ligand>
</feature>
<feature type="binding site" evidence="1">
    <location>
        <position position="207"/>
    </location>
    <ligand>
        <name>a divalent metal cation</name>
        <dbReference type="ChEBI" id="CHEBI:60240"/>
        <label>1</label>
    </ligand>
</feature>
<feature type="binding site" evidence="1">
    <location>
        <position position="207"/>
    </location>
    <ligand>
        <name>a divalent metal cation</name>
        <dbReference type="ChEBI" id="CHEBI:60240"/>
        <label>2</label>
        <note>catalytic</note>
    </ligand>
</feature>
<feature type="binding site" evidence="1">
    <location>
        <position position="276"/>
    </location>
    <ligand>
        <name>a divalent metal cation</name>
        <dbReference type="ChEBI" id="CHEBI:60240"/>
        <label>2</label>
        <note>catalytic</note>
    </ligand>
</feature>
<feature type="binding site" evidence="1">
    <location>
        <position position="284"/>
    </location>
    <ligand>
        <name>substrate</name>
    </ligand>
</feature>
<feature type="binding site" evidence="1">
    <location>
        <position position="309"/>
    </location>
    <ligand>
        <name>a divalent metal cation</name>
        <dbReference type="ChEBI" id="CHEBI:60240"/>
        <label>2</label>
        <note>catalytic</note>
    </ligand>
</feature>
<feature type="binding site" evidence="1">
    <location>
        <position position="404"/>
    </location>
    <ligand>
        <name>a divalent metal cation</name>
        <dbReference type="ChEBI" id="CHEBI:60240"/>
        <label>1</label>
    </ligand>
</feature>
<feature type="binding site" evidence="1">
    <location>
        <position position="404"/>
    </location>
    <ligand>
        <name>a divalent metal cation</name>
        <dbReference type="ChEBI" id="CHEBI:60240"/>
        <label>2</label>
        <note>catalytic</note>
    </ligand>
</feature>